<keyword id="KW-0010">Activator</keyword>
<keyword id="KW-0217">Developmental protein</keyword>
<keyword id="KW-0238">DNA-binding</keyword>
<keyword id="KW-0479">Metal-binding</keyword>
<keyword id="KW-0539">Nucleus</keyword>
<keyword id="KW-1267">Proteomics identification</keyword>
<keyword id="KW-1185">Reference proteome</keyword>
<keyword id="KW-0677">Repeat</keyword>
<keyword id="KW-0804">Transcription</keyword>
<keyword id="KW-0805">Transcription regulation</keyword>
<keyword id="KW-0862">Zinc</keyword>
<keyword id="KW-0863">Zinc-finger</keyword>
<reference key="1">
    <citation type="journal article" date="2004" name="Nature">
        <title>The DNA sequence and biology of human chromosome 19.</title>
        <authorList>
            <person name="Grimwood J."/>
            <person name="Gordon L.A."/>
            <person name="Olsen A.S."/>
            <person name="Terry A."/>
            <person name="Schmutz J."/>
            <person name="Lamerdin J.E."/>
            <person name="Hellsten U."/>
            <person name="Goodstein D."/>
            <person name="Couronne O."/>
            <person name="Tran-Gyamfi M."/>
            <person name="Aerts A."/>
            <person name="Altherr M."/>
            <person name="Ashworth L."/>
            <person name="Bajorek E."/>
            <person name="Black S."/>
            <person name="Branscomb E."/>
            <person name="Caenepeel S."/>
            <person name="Carrano A.V."/>
            <person name="Caoile C."/>
            <person name="Chan Y.M."/>
            <person name="Christensen M."/>
            <person name="Cleland C.A."/>
            <person name="Copeland A."/>
            <person name="Dalin E."/>
            <person name="Dehal P."/>
            <person name="Denys M."/>
            <person name="Detter J.C."/>
            <person name="Escobar J."/>
            <person name="Flowers D."/>
            <person name="Fotopulos D."/>
            <person name="Garcia C."/>
            <person name="Georgescu A.M."/>
            <person name="Glavina T."/>
            <person name="Gomez M."/>
            <person name="Gonzales E."/>
            <person name="Groza M."/>
            <person name="Hammon N."/>
            <person name="Hawkins T."/>
            <person name="Haydu L."/>
            <person name="Ho I."/>
            <person name="Huang W."/>
            <person name="Israni S."/>
            <person name="Jett J."/>
            <person name="Kadner K."/>
            <person name="Kimball H."/>
            <person name="Kobayashi A."/>
            <person name="Larionov V."/>
            <person name="Leem S.-H."/>
            <person name="Lopez F."/>
            <person name="Lou Y."/>
            <person name="Lowry S."/>
            <person name="Malfatti S."/>
            <person name="Martinez D."/>
            <person name="McCready P.M."/>
            <person name="Medina C."/>
            <person name="Morgan J."/>
            <person name="Nelson K."/>
            <person name="Nolan M."/>
            <person name="Ovcharenko I."/>
            <person name="Pitluck S."/>
            <person name="Pollard M."/>
            <person name="Popkie A.P."/>
            <person name="Predki P."/>
            <person name="Quan G."/>
            <person name="Ramirez L."/>
            <person name="Rash S."/>
            <person name="Retterer J."/>
            <person name="Rodriguez A."/>
            <person name="Rogers S."/>
            <person name="Salamov A."/>
            <person name="Salazar A."/>
            <person name="She X."/>
            <person name="Smith D."/>
            <person name="Slezak T."/>
            <person name="Solovyev V."/>
            <person name="Thayer N."/>
            <person name="Tice H."/>
            <person name="Tsai M."/>
            <person name="Ustaszewska A."/>
            <person name="Vo N."/>
            <person name="Wagner M."/>
            <person name="Wheeler J."/>
            <person name="Wu K."/>
            <person name="Xie G."/>
            <person name="Yang J."/>
            <person name="Dubchak I."/>
            <person name="Furey T.S."/>
            <person name="DeJong P."/>
            <person name="Dickson M."/>
            <person name="Gordon D."/>
            <person name="Eichler E.E."/>
            <person name="Pennacchio L.A."/>
            <person name="Richardson P."/>
            <person name="Stubbs L."/>
            <person name="Rokhsar D.S."/>
            <person name="Myers R.M."/>
            <person name="Rubin E.M."/>
            <person name="Lucas S.M."/>
        </authorList>
    </citation>
    <scope>NUCLEOTIDE SEQUENCE [LARGE SCALE GENOMIC DNA]</scope>
</reference>
<reference key="2">
    <citation type="journal article" date="2004" name="Genome Res.">
        <title>The status, quality, and expansion of the NIH full-length cDNA project: the Mammalian Gene Collection (MGC).</title>
        <authorList>
            <consortium name="The MGC Project Team"/>
        </authorList>
    </citation>
    <scope>NUCLEOTIDE SEQUENCE [LARGE SCALE MRNA]</scope>
    <source>
        <tissue>Brain</tissue>
    </source>
</reference>
<reference key="3">
    <citation type="journal article" date="2005" name="Mol. Cell. Biol.">
        <title>The zinc finger-only protein Zfp260 is a novel cardiac regulator and a nuclear effector of alpha1-adrenergic signaling.</title>
        <authorList>
            <person name="Debrus S."/>
            <person name="Rahbani L."/>
            <person name="Marttila M."/>
            <person name="Delorme B."/>
            <person name="Paradis P."/>
            <person name="Nemer M."/>
        </authorList>
    </citation>
    <scope>SUBCELLULAR LOCATION</scope>
    <scope>INDUCTION</scope>
</reference>
<feature type="chain" id="PRO_0000047320" description="Zinc finger protein 260">
    <location>
        <begin position="1"/>
        <end position="412"/>
    </location>
</feature>
<feature type="zinc finger region" description="C2H2-type 1" evidence="2">
    <location>
        <begin position="27"/>
        <end position="49"/>
    </location>
</feature>
<feature type="zinc finger region" description="C2H2-type 2" evidence="2">
    <location>
        <begin position="55"/>
        <end position="77"/>
    </location>
</feature>
<feature type="zinc finger region" description="C2H2-type 3" evidence="2">
    <location>
        <begin position="83"/>
        <end position="105"/>
    </location>
</feature>
<feature type="zinc finger region" description="C2H2-type 4" evidence="2">
    <location>
        <begin position="136"/>
        <end position="158"/>
    </location>
</feature>
<feature type="zinc finger region" description="C2H2-type 5" evidence="2">
    <location>
        <begin position="164"/>
        <end position="186"/>
    </location>
</feature>
<feature type="zinc finger region" description="C2H2-type 6" evidence="2">
    <location>
        <begin position="192"/>
        <end position="214"/>
    </location>
</feature>
<feature type="zinc finger region" description="C2H2-type 7" evidence="2">
    <location>
        <begin position="220"/>
        <end position="242"/>
    </location>
</feature>
<feature type="zinc finger region" description="C2H2-type 8" evidence="2">
    <location>
        <begin position="248"/>
        <end position="270"/>
    </location>
</feature>
<feature type="zinc finger region" description="C2H2-type 9" evidence="2">
    <location>
        <begin position="276"/>
        <end position="298"/>
    </location>
</feature>
<feature type="zinc finger region" description="C2H2-type 10" evidence="2">
    <location>
        <begin position="304"/>
        <end position="326"/>
    </location>
</feature>
<feature type="zinc finger region" description="C2H2-type 11" evidence="2">
    <location>
        <begin position="332"/>
        <end position="354"/>
    </location>
</feature>
<feature type="zinc finger region" description="C2H2-type 12" evidence="2">
    <location>
        <begin position="360"/>
        <end position="382"/>
    </location>
</feature>
<feature type="zinc finger region" description="C2H2-type 13" evidence="2">
    <location>
        <begin position="388"/>
        <end position="412"/>
    </location>
</feature>
<proteinExistence type="evidence at protein level"/>
<dbReference type="EMBL" id="AC092295">
    <property type="status" value="NOT_ANNOTATED_CDS"/>
    <property type="molecule type" value="Genomic_DNA"/>
</dbReference>
<dbReference type="EMBL" id="BC042676">
    <property type="protein sequence ID" value="AAH42676.1"/>
    <property type="molecule type" value="mRNA"/>
</dbReference>
<dbReference type="EMBL" id="BC119003">
    <property type="protein sequence ID" value="AAI19004.1"/>
    <property type="molecule type" value="mRNA"/>
</dbReference>
<dbReference type="EMBL" id="BC122549">
    <property type="protein sequence ID" value="AAI22550.1"/>
    <property type="molecule type" value="mRNA"/>
</dbReference>
<dbReference type="CCDS" id="CCDS33003.1"/>
<dbReference type="RefSeq" id="NP_001012774.1">
    <property type="nucleotide sequence ID" value="NM_001012756.3"/>
</dbReference>
<dbReference type="RefSeq" id="NP_001159508.1">
    <property type="nucleotide sequence ID" value="NM_001166036.2"/>
</dbReference>
<dbReference type="RefSeq" id="NP_001159509.1">
    <property type="nucleotide sequence ID" value="NM_001166037.2"/>
</dbReference>
<dbReference type="RefSeq" id="NP_001159510.1">
    <property type="nucleotide sequence ID" value="NM_001166038.2"/>
</dbReference>
<dbReference type="RefSeq" id="NP_001362525.1">
    <property type="nucleotide sequence ID" value="NM_001375596.1"/>
</dbReference>
<dbReference type="RefSeq" id="NP_001362526.1">
    <property type="nucleotide sequence ID" value="NM_001375597.1"/>
</dbReference>
<dbReference type="RefSeq" id="NP_001362527.1">
    <property type="nucleotide sequence ID" value="NM_001375598.1"/>
</dbReference>
<dbReference type="RefSeq" id="XP_011525199.1">
    <property type="nucleotide sequence ID" value="XM_011526897.2"/>
</dbReference>
<dbReference type="RefSeq" id="XP_016882230.1">
    <property type="nucleotide sequence ID" value="XM_017026741.2"/>
</dbReference>
<dbReference type="RefSeq" id="XP_054176800.1">
    <property type="nucleotide sequence ID" value="XM_054320825.1"/>
</dbReference>
<dbReference type="SMR" id="Q3ZCT1"/>
<dbReference type="BioGRID" id="130868">
    <property type="interactions" value="15"/>
</dbReference>
<dbReference type="FunCoup" id="Q3ZCT1">
    <property type="interactions" value="1269"/>
</dbReference>
<dbReference type="IntAct" id="Q3ZCT1">
    <property type="interactions" value="12"/>
</dbReference>
<dbReference type="STRING" id="9606.ENSP00000429803"/>
<dbReference type="iPTMnet" id="Q3ZCT1"/>
<dbReference type="PhosphoSitePlus" id="Q3ZCT1"/>
<dbReference type="BioMuta" id="ZNF260"/>
<dbReference type="DMDM" id="215274187"/>
<dbReference type="jPOST" id="Q3ZCT1"/>
<dbReference type="MassIVE" id="Q3ZCT1"/>
<dbReference type="PaxDb" id="9606-ENSP00000429803"/>
<dbReference type="PeptideAtlas" id="Q3ZCT1"/>
<dbReference type="ProteomicsDB" id="61911"/>
<dbReference type="Antibodypedia" id="48040">
    <property type="antibodies" value="40 antibodies from 11 providers"/>
</dbReference>
<dbReference type="DNASU" id="339324"/>
<dbReference type="Ensembl" id="ENST00000523638.6">
    <property type="protein sequence ID" value="ENSP00000429803.1"/>
    <property type="gene ID" value="ENSG00000254004.7"/>
</dbReference>
<dbReference type="Ensembl" id="ENST00000588993.1">
    <property type="protein sequence ID" value="ENSP00000467219.1"/>
    <property type="gene ID" value="ENSG00000254004.7"/>
</dbReference>
<dbReference type="Ensembl" id="ENST00000592282.1">
    <property type="protein sequence ID" value="ENSP00000464964.1"/>
    <property type="gene ID" value="ENSG00000254004.7"/>
</dbReference>
<dbReference type="Ensembl" id="ENST00000593142.5">
    <property type="protein sequence ID" value="ENSP00000465834.1"/>
    <property type="gene ID" value="ENSG00000254004.7"/>
</dbReference>
<dbReference type="GeneID" id="339324"/>
<dbReference type="KEGG" id="hsa:339324"/>
<dbReference type="MANE-Select" id="ENST00000523638.6">
    <property type="protein sequence ID" value="ENSP00000429803.1"/>
    <property type="RefSeq nucleotide sequence ID" value="NM_001166037.2"/>
    <property type="RefSeq protein sequence ID" value="NP_001159509.1"/>
</dbReference>
<dbReference type="UCSC" id="uc002oee.3">
    <property type="organism name" value="human"/>
</dbReference>
<dbReference type="AGR" id="HGNC:13499"/>
<dbReference type="CTD" id="339324"/>
<dbReference type="DisGeNET" id="339324"/>
<dbReference type="GeneCards" id="ZNF260"/>
<dbReference type="HGNC" id="HGNC:13499">
    <property type="gene designation" value="ZNF260"/>
</dbReference>
<dbReference type="HPA" id="ENSG00000254004">
    <property type="expression patterns" value="Low tissue specificity"/>
</dbReference>
<dbReference type="MIM" id="613749">
    <property type="type" value="gene"/>
</dbReference>
<dbReference type="neXtProt" id="NX_Q3ZCT1"/>
<dbReference type="OpenTargets" id="ENSG00000254004"/>
<dbReference type="PharmGKB" id="PA145147548"/>
<dbReference type="VEuPathDB" id="HostDB:ENSG00000254004"/>
<dbReference type="eggNOG" id="KOG1721">
    <property type="taxonomic scope" value="Eukaryota"/>
</dbReference>
<dbReference type="GeneTree" id="ENSGT00940000162468"/>
<dbReference type="HOGENOM" id="CLU_002678_44_0_1"/>
<dbReference type="InParanoid" id="Q3ZCT1"/>
<dbReference type="OMA" id="FSQKSHY"/>
<dbReference type="OrthoDB" id="654211at2759"/>
<dbReference type="PAN-GO" id="Q3ZCT1">
    <property type="GO annotations" value="4 GO annotations based on evolutionary models"/>
</dbReference>
<dbReference type="PhylomeDB" id="Q3ZCT1"/>
<dbReference type="TreeFam" id="TF341817"/>
<dbReference type="PathwayCommons" id="Q3ZCT1"/>
<dbReference type="SignaLink" id="Q3ZCT1"/>
<dbReference type="BioGRID-ORCS" id="339324">
    <property type="hits" value="11 hits in 1162 CRISPR screens"/>
</dbReference>
<dbReference type="ChiTaRS" id="ZNF260">
    <property type="organism name" value="human"/>
</dbReference>
<dbReference type="GenomeRNAi" id="339324"/>
<dbReference type="Pharos" id="Q3ZCT1">
    <property type="development level" value="Tdark"/>
</dbReference>
<dbReference type="PRO" id="PR:Q3ZCT1"/>
<dbReference type="Proteomes" id="UP000005640">
    <property type="component" value="Chromosome 19"/>
</dbReference>
<dbReference type="RNAct" id="Q3ZCT1">
    <property type="molecule type" value="protein"/>
</dbReference>
<dbReference type="Bgee" id="ENSG00000254004">
    <property type="expression patterns" value="Expressed in oviduct epithelium and 191 other cell types or tissues"/>
</dbReference>
<dbReference type="GO" id="GO:0005829">
    <property type="term" value="C:cytosol"/>
    <property type="evidence" value="ECO:0000314"/>
    <property type="project" value="HPA"/>
</dbReference>
<dbReference type="GO" id="GO:0005654">
    <property type="term" value="C:nucleoplasm"/>
    <property type="evidence" value="ECO:0000314"/>
    <property type="project" value="HPA"/>
</dbReference>
<dbReference type="GO" id="GO:0005634">
    <property type="term" value="C:nucleus"/>
    <property type="evidence" value="ECO:0000318"/>
    <property type="project" value="GO_Central"/>
</dbReference>
<dbReference type="GO" id="GO:0000981">
    <property type="term" value="F:DNA-binding transcription factor activity, RNA polymerase II-specific"/>
    <property type="evidence" value="ECO:0000318"/>
    <property type="project" value="GO_Central"/>
</dbReference>
<dbReference type="GO" id="GO:0000978">
    <property type="term" value="F:RNA polymerase II cis-regulatory region sequence-specific DNA binding"/>
    <property type="evidence" value="ECO:0000318"/>
    <property type="project" value="GO_Central"/>
</dbReference>
<dbReference type="GO" id="GO:0008270">
    <property type="term" value="F:zinc ion binding"/>
    <property type="evidence" value="ECO:0007669"/>
    <property type="project" value="UniProtKB-KW"/>
</dbReference>
<dbReference type="GO" id="GO:0006357">
    <property type="term" value="P:regulation of transcription by RNA polymerase II"/>
    <property type="evidence" value="ECO:0000318"/>
    <property type="project" value="GO_Central"/>
</dbReference>
<dbReference type="FunFam" id="3.30.160.60:FF:000045">
    <property type="entry name" value="ZFP69 zinc finger protein B"/>
    <property type="match status" value="1"/>
</dbReference>
<dbReference type="FunFam" id="3.30.160.60:FF:000794">
    <property type="entry name" value="zinc finger protein 2 isoform X2"/>
    <property type="match status" value="1"/>
</dbReference>
<dbReference type="FunFam" id="3.30.160.60:FF:000919">
    <property type="entry name" value="Zinc finger protein 260"/>
    <property type="match status" value="2"/>
</dbReference>
<dbReference type="FunFam" id="3.30.160.60:FF:001408">
    <property type="entry name" value="Zinc finger protein 260"/>
    <property type="match status" value="1"/>
</dbReference>
<dbReference type="FunFam" id="3.30.160.60:FF:002866">
    <property type="entry name" value="Zinc finger protein 260"/>
    <property type="match status" value="1"/>
</dbReference>
<dbReference type="FunFam" id="3.30.160.60:FF:000348">
    <property type="entry name" value="zinc finger protein 260"/>
    <property type="match status" value="1"/>
</dbReference>
<dbReference type="FunFam" id="3.30.160.60:FF:000224">
    <property type="entry name" value="Zinc finger protein 329"/>
    <property type="match status" value="1"/>
</dbReference>
<dbReference type="FunFam" id="3.30.160.60:FF:002343">
    <property type="entry name" value="Zinc finger protein 33A"/>
    <property type="match status" value="3"/>
</dbReference>
<dbReference type="FunFam" id="3.30.160.60:FF:000016">
    <property type="entry name" value="zinc finger protein 37 homolog"/>
    <property type="match status" value="1"/>
</dbReference>
<dbReference type="FunFam" id="3.30.160.60:FF:001060">
    <property type="entry name" value="Zinc finger protein OZF"/>
    <property type="match status" value="1"/>
</dbReference>
<dbReference type="Gene3D" id="3.30.160.60">
    <property type="entry name" value="Classic Zinc Finger"/>
    <property type="match status" value="13"/>
</dbReference>
<dbReference type="InterPro" id="IPR050826">
    <property type="entry name" value="Krueppel_C2H2_ZnFinger"/>
</dbReference>
<dbReference type="InterPro" id="IPR036236">
    <property type="entry name" value="Znf_C2H2_sf"/>
</dbReference>
<dbReference type="InterPro" id="IPR013087">
    <property type="entry name" value="Znf_C2H2_type"/>
</dbReference>
<dbReference type="PANTHER" id="PTHR24377">
    <property type="entry name" value="IP01015P-RELATED"/>
    <property type="match status" value="1"/>
</dbReference>
<dbReference type="Pfam" id="PF00096">
    <property type="entry name" value="zf-C2H2"/>
    <property type="match status" value="11"/>
</dbReference>
<dbReference type="Pfam" id="PF13465">
    <property type="entry name" value="zf-H2C2_2"/>
    <property type="match status" value="1"/>
</dbReference>
<dbReference type="SMART" id="SM00355">
    <property type="entry name" value="ZnF_C2H2"/>
    <property type="match status" value="14"/>
</dbReference>
<dbReference type="SUPFAM" id="SSF57667">
    <property type="entry name" value="beta-beta-alpha zinc fingers"/>
    <property type="match status" value="8"/>
</dbReference>
<dbReference type="PROSITE" id="PS00028">
    <property type="entry name" value="ZINC_FINGER_C2H2_1"/>
    <property type="match status" value="13"/>
</dbReference>
<dbReference type="PROSITE" id="PS50157">
    <property type="entry name" value="ZINC_FINGER_C2H2_2"/>
    <property type="match status" value="13"/>
</dbReference>
<evidence type="ECO:0000250" key="1"/>
<evidence type="ECO:0000255" key="2">
    <source>
        <dbReference type="PROSITE-ProRule" id="PRU00042"/>
    </source>
</evidence>
<evidence type="ECO:0000269" key="3">
    <source>
    </source>
</evidence>
<evidence type="ECO:0000305" key="4"/>
<name>ZN260_HUMAN</name>
<organism>
    <name type="scientific">Homo sapiens</name>
    <name type="common">Human</name>
    <dbReference type="NCBI Taxonomy" id="9606"/>
    <lineage>
        <taxon>Eukaryota</taxon>
        <taxon>Metazoa</taxon>
        <taxon>Chordata</taxon>
        <taxon>Craniata</taxon>
        <taxon>Vertebrata</taxon>
        <taxon>Euteleostomi</taxon>
        <taxon>Mammalia</taxon>
        <taxon>Eutheria</taxon>
        <taxon>Euarchontoglires</taxon>
        <taxon>Primates</taxon>
        <taxon>Haplorrhini</taxon>
        <taxon>Catarrhini</taxon>
        <taxon>Hominidae</taxon>
        <taxon>Homo</taxon>
    </lineage>
</organism>
<protein>
    <recommendedName>
        <fullName>Zinc finger protein 260</fullName>
        <shortName>Zfp-260</shortName>
    </recommendedName>
</protein>
<accession>Q3ZCT1</accession>
<accession>Q0VF43</accession>
<sequence length="412" mass="47222">MIGMLESLQHESDLLQHDQIHTGEKPYECNECRKTFSLKQNLVEHKKMHTGEKSHECTECGKVCSRVSSLTLHLRSHTGKKAYKCNKCGKAFSQKENFLSHQKHHTGEKPYECEKVSIQMPTIIRHQKNHTGTKPYACKECGKAFNGKAYLTEHEKIHTGEKPFECNQCGRAFSQKQYLIKHQNIHTGKKPFKCSECGKAFSQKENLIIHQRIHTGEKPYECKGCGKAFIQKSSLIRHQRSHTGEKPYTCKECGKAFSGKSNLTEHEKIHIGEKPYKCNECGTIFRQKQYLIKHHNIHTGEKPYECNKCGKAFSRITSLIVHVRIHTGDKPYECKVCGKAFCQSSSLTVHMRSHTGEKPYGCNECGKAFSQFSTLALHMRIHTGEKPYQCSECGKAFSQKSHHIRHQRIHTH</sequence>
<gene>
    <name type="primary">ZNF260</name>
    <name type="synonym">ZFP260</name>
</gene>
<comment type="function">
    <text evidence="1">Transcription factor that acts as a cardiac regulator and an effector of alpha1-adrenergic signaling. Binds to PE response elements (PERE) present in the promoter of genes such as ANF/NPPA and acts as a direct transcriptional activator of NPPA. Also acts as a cofactor with GATA4, a key cardiac regulator (By similarity).</text>
</comment>
<comment type="subunit">
    <text evidence="1">Binds DNA. Interacts with GATA4 (By similarity).</text>
</comment>
<comment type="interaction">
    <interactant intactId="EBI-10241410">
        <id>Q3ZCT1</id>
    </interactant>
    <interactant intactId="EBI-10172290">
        <id>P60409</id>
        <label>KRTAP10-7</label>
    </interactant>
    <organismsDiffer>false</organismsDiffer>
    <experiments>3</experiments>
</comment>
<comment type="interaction">
    <interactant intactId="EBI-10241410">
        <id>Q3ZCT1</id>
    </interactant>
    <interactant intactId="EBI-928842">
        <id>Q9GZM8</id>
        <label>NDEL1</label>
    </interactant>
    <organismsDiffer>false</organismsDiffer>
    <experiments>3</experiments>
</comment>
<comment type="interaction">
    <interactant intactId="EBI-10241410">
        <id>Q3ZCT1</id>
    </interactant>
    <interactant intactId="EBI-11985915">
        <id>Q5T619</id>
        <label>ZNF648</label>
    </interactant>
    <organismsDiffer>false</organismsDiffer>
    <experiments>3</experiments>
</comment>
<comment type="subcellular location">
    <subcellularLocation>
        <location evidence="3">Nucleus</location>
    </subcellularLocation>
</comment>
<comment type="induction">
    <text evidence="3">Up-regulated by activation of alpha1-adrenergic receptors.</text>
</comment>
<comment type="similarity">
    <text evidence="4">Belongs to the krueppel C2H2-type zinc-finger protein family.</text>
</comment>
<comment type="caution">
    <text evidence="4">It is uncertain whether Met-1 or Met-4 is the initiator.</text>
</comment>